<reference key="1">
    <citation type="journal article" date="2002" name="Nucleic Acids Res.">
        <title>Genome sequence of Shigella flexneri 2a: insights into pathogenicity through comparison with genomes of Escherichia coli K12 and O157.</title>
        <authorList>
            <person name="Jin Q."/>
            <person name="Yuan Z."/>
            <person name="Xu J."/>
            <person name="Wang Y."/>
            <person name="Shen Y."/>
            <person name="Lu W."/>
            <person name="Wang J."/>
            <person name="Liu H."/>
            <person name="Yang J."/>
            <person name="Yang F."/>
            <person name="Zhang X."/>
            <person name="Zhang J."/>
            <person name="Yang G."/>
            <person name="Wu H."/>
            <person name="Qu D."/>
            <person name="Dong J."/>
            <person name="Sun L."/>
            <person name="Xue Y."/>
            <person name="Zhao A."/>
            <person name="Gao Y."/>
            <person name="Zhu J."/>
            <person name="Kan B."/>
            <person name="Ding K."/>
            <person name="Chen S."/>
            <person name="Cheng H."/>
            <person name="Yao Z."/>
            <person name="He B."/>
            <person name="Chen R."/>
            <person name="Ma D."/>
            <person name="Qiang B."/>
            <person name="Wen Y."/>
            <person name="Hou Y."/>
            <person name="Yu J."/>
        </authorList>
    </citation>
    <scope>NUCLEOTIDE SEQUENCE [LARGE SCALE GENOMIC DNA]</scope>
    <source>
        <strain>301 / Serotype 2a</strain>
    </source>
</reference>
<reference key="2">
    <citation type="journal article" date="2003" name="Infect. Immun.">
        <title>Complete genome sequence and comparative genomics of Shigella flexneri serotype 2a strain 2457T.</title>
        <authorList>
            <person name="Wei J."/>
            <person name="Goldberg M.B."/>
            <person name="Burland V."/>
            <person name="Venkatesan M.M."/>
            <person name="Deng W."/>
            <person name="Fournier G."/>
            <person name="Mayhew G.F."/>
            <person name="Plunkett G. III"/>
            <person name="Rose D.J."/>
            <person name="Darling A."/>
            <person name="Mau B."/>
            <person name="Perna N.T."/>
            <person name="Payne S.M."/>
            <person name="Runyen-Janecky L.J."/>
            <person name="Zhou S."/>
            <person name="Schwartz D.C."/>
            <person name="Blattner F.R."/>
        </authorList>
    </citation>
    <scope>NUCLEOTIDE SEQUENCE [LARGE SCALE GENOMIC DNA]</scope>
    <source>
        <strain>ATCC 700930 / 2457T / Serotype 2a</strain>
    </source>
</reference>
<gene>
    <name type="primary">ttdT</name>
    <name type="ordered locus">SF3104</name>
    <name type="ordered locus">S3309</name>
</gene>
<sequence length="487" mass="52953">MKPSTEWWRYLAPLAVIAIIALLPVPAGLENHTWLYFAVFTGVIVGLILEPVPGAVVAMVGISIIAILSPWLLFSPEQLAQPGFKFTAKSLSWAVSGFSNSVIWLIFAAFMFGTGYEKTGLGRRIALILVKKMGHRTLFLGYAVMFSELILAPVTPSNSARGAGIIYPIIRNLPPLYQSQPNDSSSRSIGSYIMWMGIVADCVTSAIFLTAMAPNLLLIGLMKSASHATLSWGDWFLGMLPLSILLVLLVPWLAYVLYPPVLKSGDQVPRWAETELQAMGPLCSREKRMLGLMVGALVLWIFGGDYIDAAMVGYSVVALMLLLRIISWDDIVSNKAAWNVFFWLASLITLATGLNNTGFISWFGKLLAGSLSGYSPTMVMVTLIVVFYLLRYFFASATAYTCALAPMMIAAALAMPEIPLPVFCLMVGAAIGLGSILTPYATGPSPIYYGSGYLPTADYWRLGAIFGLIFLVLLVITGLLWMPVVLL</sequence>
<evidence type="ECO:0000250" key="1">
    <source>
        <dbReference type="UniProtKB" id="P39414"/>
    </source>
</evidence>
<evidence type="ECO:0000255" key="2"/>
<evidence type="ECO:0000305" key="3"/>
<accession>Q83JJ9</accession>
<accession>Q7BZV2</accession>
<protein>
    <recommendedName>
        <fullName evidence="1">L-tartrate/succinate antiporter</fullName>
    </recommendedName>
    <alternativeName>
        <fullName>Tartrate carrier</fullName>
    </alternativeName>
    <alternativeName>
        <fullName>Tartrate transporter</fullName>
    </alternativeName>
</protein>
<dbReference type="EMBL" id="AE005674">
    <property type="protein sequence ID" value="AAN44580.1"/>
    <property type="molecule type" value="Genomic_DNA"/>
</dbReference>
<dbReference type="EMBL" id="AE014073">
    <property type="protein sequence ID" value="AAP18392.1"/>
    <property type="molecule type" value="Genomic_DNA"/>
</dbReference>
<dbReference type="RefSeq" id="WP_000804975.1">
    <property type="nucleotide sequence ID" value="NZ_WPGW01000061.1"/>
</dbReference>
<dbReference type="SMR" id="Q83JJ9"/>
<dbReference type="STRING" id="198214.SF3104"/>
<dbReference type="PaxDb" id="198214-SF3104"/>
<dbReference type="KEGG" id="sfl:SF3104"/>
<dbReference type="KEGG" id="sfx:S3309"/>
<dbReference type="PATRIC" id="fig|198214.7.peg.3683"/>
<dbReference type="HOGENOM" id="CLU_005170_7_0_6"/>
<dbReference type="Proteomes" id="UP000001006">
    <property type="component" value="Chromosome"/>
</dbReference>
<dbReference type="Proteomes" id="UP000002673">
    <property type="component" value="Chromosome"/>
</dbReference>
<dbReference type="GO" id="GO:0005886">
    <property type="term" value="C:plasma membrane"/>
    <property type="evidence" value="ECO:0007669"/>
    <property type="project" value="UniProtKB-SubCell"/>
</dbReference>
<dbReference type="GO" id="GO:0015297">
    <property type="term" value="F:antiporter activity"/>
    <property type="evidence" value="ECO:0007669"/>
    <property type="project" value="UniProtKB-KW"/>
</dbReference>
<dbReference type="InterPro" id="IPR030676">
    <property type="entry name" value="CitT-rel"/>
</dbReference>
<dbReference type="InterPro" id="IPR001898">
    <property type="entry name" value="SLC13A/DASS"/>
</dbReference>
<dbReference type="NCBIfam" id="TIGR00785">
    <property type="entry name" value="dass"/>
    <property type="match status" value="1"/>
</dbReference>
<dbReference type="PANTHER" id="PTHR42826">
    <property type="entry name" value="DICARBOXYLATE TRANSPORTER 2.1, CHLOROPLASTIC"/>
    <property type="match status" value="1"/>
</dbReference>
<dbReference type="Pfam" id="PF00939">
    <property type="entry name" value="Na_sulph_symp"/>
    <property type="match status" value="1"/>
</dbReference>
<dbReference type="PIRSF" id="PIRSF002457">
    <property type="entry name" value="DASS"/>
    <property type="match status" value="1"/>
</dbReference>
<keyword id="KW-0050">Antiport</keyword>
<keyword id="KW-0997">Cell inner membrane</keyword>
<keyword id="KW-1003">Cell membrane</keyword>
<keyword id="KW-0472">Membrane</keyword>
<keyword id="KW-1185">Reference proteome</keyword>
<keyword id="KW-0812">Transmembrane</keyword>
<keyword id="KW-1133">Transmembrane helix</keyword>
<keyword id="KW-0813">Transport</keyword>
<feature type="chain" id="PRO_0000262717" description="L-tartrate/succinate antiporter">
    <location>
        <begin position="1"/>
        <end position="487"/>
    </location>
</feature>
<feature type="transmembrane region" description="Helical" evidence="2">
    <location>
        <begin position="10"/>
        <end position="30"/>
    </location>
</feature>
<feature type="transmembrane region" description="Helical" evidence="2">
    <location>
        <begin position="33"/>
        <end position="53"/>
    </location>
</feature>
<feature type="transmembrane region" description="Helical" evidence="2">
    <location>
        <begin position="54"/>
        <end position="74"/>
    </location>
</feature>
<feature type="transmembrane region" description="Helical" evidence="2">
    <location>
        <begin position="93"/>
        <end position="113"/>
    </location>
</feature>
<feature type="transmembrane region" description="Helical" evidence="2">
    <location>
        <begin position="137"/>
        <end position="157"/>
    </location>
</feature>
<feature type="transmembrane region" description="Helical" evidence="2">
    <location>
        <begin position="189"/>
        <end position="209"/>
    </location>
</feature>
<feature type="transmembrane region" description="Helical" evidence="2">
    <location>
        <begin position="236"/>
        <end position="256"/>
    </location>
</feature>
<feature type="transmembrane region" description="Helical" evidence="2">
    <location>
        <begin position="292"/>
        <end position="312"/>
    </location>
</feature>
<feature type="transmembrane region" description="Helical" evidence="2">
    <location>
        <begin position="313"/>
        <end position="333"/>
    </location>
</feature>
<feature type="transmembrane region" description="Helical" evidence="2">
    <location>
        <begin position="340"/>
        <end position="360"/>
    </location>
</feature>
<feature type="transmembrane region" description="Helical" evidence="2">
    <location>
        <begin position="370"/>
        <end position="390"/>
    </location>
</feature>
<feature type="transmembrane region" description="Helical" evidence="2">
    <location>
        <begin position="393"/>
        <end position="413"/>
    </location>
</feature>
<feature type="transmembrane region" description="Helical" evidence="2">
    <location>
        <begin position="418"/>
        <end position="438"/>
    </location>
</feature>
<feature type="transmembrane region" description="Helical" evidence="2">
    <location>
        <begin position="465"/>
        <end position="485"/>
    </location>
</feature>
<organism>
    <name type="scientific">Shigella flexneri</name>
    <dbReference type="NCBI Taxonomy" id="623"/>
    <lineage>
        <taxon>Bacteria</taxon>
        <taxon>Pseudomonadati</taxon>
        <taxon>Pseudomonadota</taxon>
        <taxon>Gammaproteobacteria</taxon>
        <taxon>Enterobacterales</taxon>
        <taxon>Enterobacteriaceae</taxon>
        <taxon>Shigella</taxon>
    </lineage>
</organism>
<proteinExistence type="inferred from homology"/>
<name>TTDT_SHIFL</name>
<comment type="function">
    <text evidence="1">Catalyzes the uptake of tartrate in exchange for intracellular succinate. Essential for anaerobic L-tartrate fermentation.</text>
</comment>
<comment type="catalytic activity">
    <reaction evidence="1">
        <text>(2R,3R)-tartrate(out) + succinate(in) = (2R,3R)-tartrate(in) + succinate(out)</text>
        <dbReference type="Rhea" id="RHEA:29259"/>
        <dbReference type="ChEBI" id="CHEBI:30031"/>
        <dbReference type="ChEBI" id="CHEBI:30924"/>
    </reaction>
    <physiologicalReaction direction="left-to-right" evidence="1">
        <dbReference type="Rhea" id="RHEA:29260"/>
    </physiologicalReaction>
</comment>
<comment type="subcellular location">
    <subcellularLocation>
        <location evidence="1">Cell inner membrane</location>
        <topology evidence="2">Multi-pass membrane protein</topology>
    </subcellularLocation>
</comment>
<comment type="similarity">
    <text evidence="3">Belongs to the SLC13A/DASS transporter (TC 2.A.47) family. DIT1 subfamily.</text>
</comment>